<feature type="chain" id="PRO_0000331757" description="Short-chain dehydrogenase/reductase family 42E member 1">
    <location>
        <begin position="1"/>
        <end position="387"/>
    </location>
</feature>
<feature type="transmembrane region" description="Helical" evidence="3">
    <location>
        <begin position="279"/>
        <end position="299"/>
    </location>
</feature>
<feature type="transmembrane region" description="Helical" evidence="3">
    <location>
        <begin position="365"/>
        <end position="385"/>
    </location>
</feature>
<feature type="active site" description="Proton acceptor" evidence="1">
    <location>
        <position position="149"/>
    </location>
</feature>
<feature type="binding site" evidence="1">
    <location>
        <position position="153"/>
    </location>
    <ligand>
        <name>NAD(+)</name>
        <dbReference type="ChEBI" id="CHEBI:57540"/>
    </ligand>
</feature>
<feature type="sequence conflict" description="In Ref. 2; AAI09447." evidence="4" ref="2">
    <original>A</original>
    <variation>T</variation>
    <location>
        <position position="77"/>
    </location>
</feature>
<feature type="sequence conflict" description="In Ref. 2; AAI09447." evidence="4" ref="2">
    <original>N</original>
    <variation>S</variation>
    <location>
        <position position="203"/>
    </location>
</feature>
<feature type="sequence conflict" description="In Ref. 2; AAI09447." evidence="4" ref="2">
    <original>R</original>
    <variation>Q</variation>
    <location>
        <position position="328"/>
    </location>
</feature>
<gene>
    <name type="primary">sdr42e1</name>
    <name type="ORF">si:ch211-79l17.4</name>
    <name type="ORF">zgc:123280</name>
</gene>
<comment type="subcellular location">
    <subcellularLocation>
        <location evidence="4">Membrane</location>
        <topology evidence="4">Multi-pass membrane protein</topology>
    </subcellularLocation>
</comment>
<comment type="similarity">
    <text evidence="4">Belongs to the 3-beta-HSD family.</text>
</comment>
<comment type="sequence caution" evidence="4">
    <conflict type="miscellaneous discrepancy">
        <sequence resource="EMBL-CDS" id="AAI09447"/>
    </conflict>
    <text>Contains miscellaneous N-terminal sequence and a possible frameshift.</text>
</comment>
<dbReference type="EC" id="1.1.1.-"/>
<dbReference type="EMBL" id="AL929392">
    <property type="protein sequence ID" value="CAP09266.1"/>
    <property type="molecule type" value="Genomic_DNA"/>
</dbReference>
<dbReference type="EMBL" id="BC109446">
    <property type="protein sequence ID" value="AAI09447.1"/>
    <property type="status" value="ALT_SEQ"/>
    <property type="molecule type" value="mRNA"/>
</dbReference>
<dbReference type="RefSeq" id="NP_001297010.1">
    <property type="nucleotide sequence ID" value="NM_001310081.1"/>
</dbReference>
<dbReference type="SMR" id="A8DZE7"/>
<dbReference type="FunCoup" id="A8DZE7">
    <property type="interactions" value="26"/>
</dbReference>
<dbReference type="STRING" id="7955.ENSDARP00000139728"/>
<dbReference type="PaxDb" id="7955-ENSDARP00000005772"/>
<dbReference type="Ensembl" id="ENSDART00000169974">
    <property type="protein sequence ID" value="ENSDARP00000139728"/>
    <property type="gene ID" value="ENSDARG00000098838"/>
</dbReference>
<dbReference type="GeneID" id="565964"/>
<dbReference type="KEGG" id="dre:565964"/>
<dbReference type="AGR" id="ZFIN:ZDB-GENE-051120-63"/>
<dbReference type="CTD" id="93517"/>
<dbReference type="ZFIN" id="ZDB-GENE-051120-63">
    <property type="gene designation" value="sdr42e1"/>
</dbReference>
<dbReference type="eggNOG" id="KOG1430">
    <property type="taxonomic scope" value="Eukaryota"/>
</dbReference>
<dbReference type="HOGENOM" id="CLU_007383_6_8_1"/>
<dbReference type="InParanoid" id="A8DZE7"/>
<dbReference type="OMA" id="IGAYKRS"/>
<dbReference type="OrthoDB" id="2735536at2759"/>
<dbReference type="PhylomeDB" id="A8DZE7"/>
<dbReference type="PRO" id="PR:A8DZE7"/>
<dbReference type="Proteomes" id="UP000000437">
    <property type="component" value="Chromosome 18"/>
</dbReference>
<dbReference type="Bgee" id="ENSDARG00000098838">
    <property type="expression patterns" value="Expressed in liver and 15 other cell types or tissues"/>
</dbReference>
<dbReference type="ExpressionAtlas" id="A8DZE7">
    <property type="expression patterns" value="baseline"/>
</dbReference>
<dbReference type="GO" id="GO:0016020">
    <property type="term" value="C:membrane"/>
    <property type="evidence" value="ECO:0007669"/>
    <property type="project" value="UniProtKB-SubCell"/>
</dbReference>
<dbReference type="GO" id="GO:0016616">
    <property type="term" value="F:oxidoreductase activity, acting on the CH-OH group of donors, NAD or NADP as acceptor"/>
    <property type="evidence" value="ECO:0000318"/>
    <property type="project" value="GO_Central"/>
</dbReference>
<dbReference type="GO" id="GO:0006694">
    <property type="term" value="P:steroid biosynthetic process"/>
    <property type="evidence" value="ECO:0007669"/>
    <property type="project" value="InterPro"/>
</dbReference>
<dbReference type="CDD" id="cd09812">
    <property type="entry name" value="3b-HSD_like_1_SDR_e"/>
    <property type="match status" value="1"/>
</dbReference>
<dbReference type="FunFam" id="3.40.50.720:FF:000138">
    <property type="entry name" value="Short-chain dehydrogenase/reductase family 42E member 1"/>
    <property type="match status" value="1"/>
</dbReference>
<dbReference type="Gene3D" id="3.40.50.720">
    <property type="entry name" value="NAD(P)-binding Rossmann-like Domain"/>
    <property type="match status" value="1"/>
</dbReference>
<dbReference type="InterPro" id="IPR002225">
    <property type="entry name" value="3Beta_OHSteriod_DH/Estase"/>
</dbReference>
<dbReference type="InterPro" id="IPR050177">
    <property type="entry name" value="Lipid_A_modif_metabolic_enz"/>
</dbReference>
<dbReference type="InterPro" id="IPR036291">
    <property type="entry name" value="NAD(P)-bd_dom_sf"/>
</dbReference>
<dbReference type="PANTHER" id="PTHR43245">
    <property type="entry name" value="BIFUNCTIONAL POLYMYXIN RESISTANCE PROTEIN ARNA"/>
    <property type="match status" value="1"/>
</dbReference>
<dbReference type="PANTHER" id="PTHR43245:SF51">
    <property type="entry name" value="SHORT CHAIN DEHYDROGENASE_REDUCTASE FAMILY 42E, MEMBER 2"/>
    <property type="match status" value="1"/>
</dbReference>
<dbReference type="Pfam" id="PF01073">
    <property type="entry name" value="3Beta_HSD"/>
    <property type="match status" value="1"/>
</dbReference>
<dbReference type="SUPFAM" id="SSF51735">
    <property type="entry name" value="NAD(P)-binding Rossmann-fold domains"/>
    <property type="match status" value="1"/>
</dbReference>
<organism>
    <name type="scientific">Danio rerio</name>
    <name type="common">Zebrafish</name>
    <name type="synonym">Brachydanio rerio</name>
    <dbReference type="NCBI Taxonomy" id="7955"/>
    <lineage>
        <taxon>Eukaryota</taxon>
        <taxon>Metazoa</taxon>
        <taxon>Chordata</taxon>
        <taxon>Craniata</taxon>
        <taxon>Vertebrata</taxon>
        <taxon>Euteleostomi</taxon>
        <taxon>Actinopterygii</taxon>
        <taxon>Neopterygii</taxon>
        <taxon>Teleostei</taxon>
        <taxon>Ostariophysi</taxon>
        <taxon>Cypriniformes</taxon>
        <taxon>Danionidae</taxon>
        <taxon>Danioninae</taxon>
        <taxon>Danio</taxon>
    </lineage>
</organism>
<proteinExistence type="evidence at transcript level"/>
<sequence>MEVNRKDNSFLITGGGGYFGFRLACALLKTSSKVVLFDVSPPIQDLPEGLIFMRADIRDYAQVEKAVRGSHCVFHIASYGMSGREQLNRKLIEEVNVKGTENILRACVAHSVPRLIYTSTFNVVFGGQEIKNGDESLPYLPLHLHPDHYSRTKSIAEMQVLKANNLALSNSTGVLRTCALRPAGIYGPGEQRHLPRIVSYIENGIFRFVYGDPDSLVEFVHVDNLVSAHLLAADALTEKQQCRAAGQAYFISDGRPVNNFEFFRPLVEGLGYSFPTLRLPISMIYFFAFLTEMVHFVVGRIYNFQPLLTRTEVYKTGVTHYFSMRKAREELGYEPKLYDLEDVVQWFQARGHGKKRSRSSIRKLILDVFVVVAFVAVLLSCLPVVGQ</sequence>
<evidence type="ECO:0000250" key="1"/>
<evidence type="ECO:0000250" key="2">
    <source>
        <dbReference type="UniProtKB" id="Q8WUS8"/>
    </source>
</evidence>
<evidence type="ECO:0000255" key="3"/>
<evidence type="ECO:0000305" key="4"/>
<keyword id="KW-0472">Membrane</keyword>
<keyword id="KW-0520">NAD</keyword>
<keyword id="KW-0560">Oxidoreductase</keyword>
<keyword id="KW-1185">Reference proteome</keyword>
<keyword id="KW-0812">Transmembrane</keyword>
<keyword id="KW-1133">Transmembrane helix</keyword>
<protein>
    <recommendedName>
        <fullName evidence="2">Short-chain dehydrogenase/reductase family 42E member 1</fullName>
        <ecNumber>1.1.1.-</ecNumber>
    </recommendedName>
</protein>
<name>D42E1_DANRE</name>
<accession>A8DZE7</accession>
<accession>Q32LS5</accession>
<reference key="1">
    <citation type="journal article" date="2013" name="Nature">
        <title>The zebrafish reference genome sequence and its relationship to the human genome.</title>
        <authorList>
            <person name="Howe K."/>
            <person name="Clark M.D."/>
            <person name="Torroja C.F."/>
            <person name="Torrance J."/>
            <person name="Berthelot C."/>
            <person name="Muffato M."/>
            <person name="Collins J.E."/>
            <person name="Humphray S."/>
            <person name="McLaren K."/>
            <person name="Matthews L."/>
            <person name="McLaren S."/>
            <person name="Sealy I."/>
            <person name="Caccamo M."/>
            <person name="Churcher C."/>
            <person name="Scott C."/>
            <person name="Barrett J.C."/>
            <person name="Koch R."/>
            <person name="Rauch G.J."/>
            <person name="White S."/>
            <person name="Chow W."/>
            <person name="Kilian B."/>
            <person name="Quintais L.T."/>
            <person name="Guerra-Assuncao J.A."/>
            <person name="Zhou Y."/>
            <person name="Gu Y."/>
            <person name="Yen J."/>
            <person name="Vogel J.H."/>
            <person name="Eyre T."/>
            <person name="Redmond S."/>
            <person name="Banerjee R."/>
            <person name="Chi J."/>
            <person name="Fu B."/>
            <person name="Langley E."/>
            <person name="Maguire S.F."/>
            <person name="Laird G.K."/>
            <person name="Lloyd D."/>
            <person name="Kenyon E."/>
            <person name="Donaldson S."/>
            <person name="Sehra H."/>
            <person name="Almeida-King J."/>
            <person name="Loveland J."/>
            <person name="Trevanion S."/>
            <person name="Jones M."/>
            <person name="Quail M."/>
            <person name="Willey D."/>
            <person name="Hunt A."/>
            <person name="Burton J."/>
            <person name="Sims S."/>
            <person name="McLay K."/>
            <person name="Plumb B."/>
            <person name="Davis J."/>
            <person name="Clee C."/>
            <person name="Oliver K."/>
            <person name="Clark R."/>
            <person name="Riddle C."/>
            <person name="Elliot D."/>
            <person name="Threadgold G."/>
            <person name="Harden G."/>
            <person name="Ware D."/>
            <person name="Begum S."/>
            <person name="Mortimore B."/>
            <person name="Kerry G."/>
            <person name="Heath P."/>
            <person name="Phillimore B."/>
            <person name="Tracey A."/>
            <person name="Corby N."/>
            <person name="Dunn M."/>
            <person name="Johnson C."/>
            <person name="Wood J."/>
            <person name="Clark S."/>
            <person name="Pelan S."/>
            <person name="Griffiths G."/>
            <person name="Smith M."/>
            <person name="Glithero R."/>
            <person name="Howden P."/>
            <person name="Barker N."/>
            <person name="Lloyd C."/>
            <person name="Stevens C."/>
            <person name="Harley J."/>
            <person name="Holt K."/>
            <person name="Panagiotidis G."/>
            <person name="Lovell J."/>
            <person name="Beasley H."/>
            <person name="Henderson C."/>
            <person name="Gordon D."/>
            <person name="Auger K."/>
            <person name="Wright D."/>
            <person name="Collins J."/>
            <person name="Raisen C."/>
            <person name="Dyer L."/>
            <person name="Leung K."/>
            <person name="Robertson L."/>
            <person name="Ambridge K."/>
            <person name="Leongamornlert D."/>
            <person name="McGuire S."/>
            <person name="Gilderthorp R."/>
            <person name="Griffiths C."/>
            <person name="Manthravadi D."/>
            <person name="Nichol S."/>
            <person name="Barker G."/>
            <person name="Whitehead S."/>
            <person name="Kay M."/>
            <person name="Brown J."/>
            <person name="Murnane C."/>
            <person name="Gray E."/>
            <person name="Humphries M."/>
            <person name="Sycamore N."/>
            <person name="Barker D."/>
            <person name="Saunders D."/>
            <person name="Wallis J."/>
            <person name="Babbage A."/>
            <person name="Hammond S."/>
            <person name="Mashreghi-Mohammadi M."/>
            <person name="Barr L."/>
            <person name="Martin S."/>
            <person name="Wray P."/>
            <person name="Ellington A."/>
            <person name="Matthews N."/>
            <person name="Ellwood M."/>
            <person name="Woodmansey R."/>
            <person name="Clark G."/>
            <person name="Cooper J."/>
            <person name="Tromans A."/>
            <person name="Grafham D."/>
            <person name="Skuce C."/>
            <person name="Pandian R."/>
            <person name="Andrews R."/>
            <person name="Harrison E."/>
            <person name="Kimberley A."/>
            <person name="Garnett J."/>
            <person name="Fosker N."/>
            <person name="Hall R."/>
            <person name="Garner P."/>
            <person name="Kelly D."/>
            <person name="Bird C."/>
            <person name="Palmer S."/>
            <person name="Gehring I."/>
            <person name="Berger A."/>
            <person name="Dooley C.M."/>
            <person name="Ersan-Urun Z."/>
            <person name="Eser C."/>
            <person name="Geiger H."/>
            <person name="Geisler M."/>
            <person name="Karotki L."/>
            <person name="Kirn A."/>
            <person name="Konantz J."/>
            <person name="Konantz M."/>
            <person name="Oberlander M."/>
            <person name="Rudolph-Geiger S."/>
            <person name="Teucke M."/>
            <person name="Lanz C."/>
            <person name="Raddatz G."/>
            <person name="Osoegawa K."/>
            <person name="Zhu B."/>
            <person name="Rapp A."/>
            <person name="Widaa S."/>
            <person name="Langford C."/>
            <person name="Yang F."/>
            <person name="Schuster S.C."/>
            <person name="Carter N.P."/>
            <person name="Harrow J."/>
            <person name="Ning Z."/>
            <person name="Herrero J."/>
            <person name="Searle S.M."/>
            <person name="Enright A."/>
            <person name="Geisler R."/>
            <person name="Plasterk R.H."/>
            <person name="Lee C."/>
            <person name="Westerfield M."/>
            <person name="de Jong P.J."/>
            <person name="Zon L.I."/>
            <person name="Postlethwait J.H."/>
            <person name="Nusslein-Volhard C."/>
            <person name="Hubbard T.J."/>
            <person name="Roest Crollius H."/>
            <person name="Rogers J."/>
            <person name="Stemple D.L."/>
        </authorList>
    </citation>
    <scope>NUCLEOTIDE SEQUENCE [LARGE SCALE GENOMIC DNA]</scope>
    <source>
        <strain>Tuebingen</strain>
    </source>
</reference>
<reference key="2">
    <citation type="submission" date="2005-11" db="EMBL/GenBank/DDBJ databases">
        <authorList>
            <consortium name="NIH - Zebrafish Gene Collection (ZGC) project"/>
        </authorList>
    </citation>
    <scope>NUCLEOTIDE SEQUENCE [LARGE SCALE MRNA]</scope>
    <source>
        <strain>AB</strain>
        <tissue>Intestine</tissue>
    </source>
</reference>